<evidence type="ECO:0000255" key="1">
    <source>
        <dbReference type="HAMAP-Rule" id="MF_00275"/>
    </source>
</evidence>
<protein>
    <recommendedName>
        <fullName evidence="1">Potassium-transporting ATPase potassium-binding subunit</fullName>
    </recommendedName>
    <alternativeName>
        <fullName evidence="1">ATP phosphohydrolase [potassium-transporting] A chain</fullName>
    </alternativeName>
    <alternativeName>
        <fullName evidence="1">Potassium-binding and translocating subunit A</fullName>
    </alternativeName>
    <alternativeName>
        <fullName evidence="1">Potassium-translocating ATPase A chain</fullName>
    </alternativeName>
</protein>
<comment type="function">
    <text evidence="1">Part of the high-affinity ATP-driven potassium transport (or Kdp) system, which catalyzes the hydrolysis of ATP coupled with the electrogenic transport of potassium into the cytoplasm. This subunit binds the extracellular potassium ions and delivers the ions to the membrane domain of KdpB through an intramembrane tunnel.</text>
</comment>
<comment type="subunit">
    <text evidence="1">The system is composed of three essential subunits: KdpA, KdpB and KdpC.</text>
</comment>
<comment type="subcellular location">
    <subcellularLocation>
        <location evidence="1">Cell membrane</location>
        <topology evidence="1">Multi-pass membrane protein</topology>
    </subcellularLocation>
</comment>
<comment type="similarity">
    <text evidence="1">Belongs to the KdpA family.</text>
</comment>
<sequence length="555" mass="59811">MIWVAVVITMLLFILVAKPTGIYLEKAFQGSKKLDKVFGPFEKLIFKITGVKEYNQTWKQYALSLVLLNGFMIVVVYFIFRLQGVLPLNPAHIEGMEPTLAFNTAISFMADTNLQHYSGENGLSYLSQLIGITFLMFAAPATTLALVMAFIRGLAGKELGNFFIDFTRALTRVFLPIAFMAALVFVAFGVPQTLDGAVTAQTIDGAKQSILRGPVASFVAIKELGNNGGGFFGANSTHPFENPGQMSNILQMMLMMLLPTALPFTYGRMVGNKKQGRILFVSLFMVFLLGFITITTSELNGNPALNGMGIEHVQGSTEGKEVRFGTVFSSLYATVTTAAETGAVNTMHDTLTPIGGLVPLVNMMLNTVYGGVGAGFVNIIMYAIIAVFISGLMVGRTPEFLGKKIEGKEMKLIAVTILFHPLLILGFSALALSTSLGTDAISHSGFHGLTQVVYEYTSSAANNGSGFEGLGDNTPFWNITTGLVMFLGRYFSLITMLAVAASLKEKTVVPETVGTFRTDNSLFGGIFIGTIVIVGALTFFPMLVLGPIAEFLTLK</sequence>
<keyword id="KW-1003">Cell membrane</keyword>
<keyword id="KW-0406">Ion transport</keyword>
<keyword id="KW-0472">Membrane</keyword>
<keyword id="KW-0630">Potassium</keyword>
<keyword id="KW-0633">Potassium transport</keyword>
<keyword id="KW-0812">Transmembrane</keyword>
<keyword id="KW-1133">Transmembrane helix</keyword>
<keyword id="KW-0813">Transport</keyword>
<organism>
    <name type="scientific">Bacillus cereus (strain ZK / E33L)</name>
    <dbReference type="NCBI Taxonomy" id="288681"/>
    <lineage>
        <taxon>Bacteria</taxon>
        <taxon>Bacillati</taxon>
        <taxon>Bacillota</taxon>
        <taxon>Bacilli</taxon>
        <taxon>Bacillales</taxon>
        <taxon>Bacillaceae</taxon>
        <taxon>Bacillus</taxon>
        <taxon>Bacillus cereus group</taxon>
    </lineage>
</organism>
<proteinExistence type="inferred from homology"/>
<accession>Q63FR1</accession>
<reference key="1">
    <citation type="journal article" date="2006" name="J. Bacteriol.">
        <title>Pathogenomic sequence analysis of Bacillus cereus and Bacillus thuringiensis isolates closely related to Bacillus anthracis.</title>
        <authorList>
            <person name="Han C.S."/>
            <person name="Xie G."/>
            <person name="Challacombe J.F."/>
            <person name="Altherr M.R."/>
            <person name="Bhotika S.S."/>
            <person name="Bruce D."/>
            <person name="Campbell C.S."/>
            <person name="Campbell M.L."/>
            <person name="Chen J."/>
            <person name="Chertkov O."/>
            <person name="Cleland C."/>
            <person name="Dimitrijevic M."/>
            <person name="Doggett N.A."/>
            <person name="Fawcett J.J."/>
            <person name="Glavina T."/>
            <person name="Goodwin L.A."/>
            <person name="Hill K.K."/>
            <person name="Hitchcock P."/>
            <person name="Jackson P.J."/>
            <person name="Keim P."/>
            <person name="Kewalramani A.R."/>
            <person name="Longmire J."/>
            <person name="Lucas S."/>
            <person name="Malfatti S."/>
            <person name="McMurry K."/>
            <person name="Meincke L.J."/>
            <person name="Misra M."/>
            <person name="Moseman B.L."/>
            <person name="Mundt M."/>
            <person name="Munk A.C."/>
            <person name="Okinaka R.T."/>
            <person name="Parson-Quintana B."/>
            <person name="Reilly L.P."/>
            <person name="Richardson P."/>
            <person name="Robinson D.L."/>
            <person name="Rubin E."/>
            <person name="Saunders E."/>
            <person name="Tapia R."/>
            <person name="Tesmer J.G."/>
            <person name="Thayer N."/>
            <person name="Thompson L.S."/>
            <person name="Tice H."/>
            <person name="Ticknor L.O."/>
            <person name="Wills P.L."/>
            <person name="Brettin T.S."/>
            <person name="Gilna P."/>
        </authorList>
    </citation>
    <scope>NUCLEOTIDE SEQUENCE [LARGE SCALE GENOMIC DNA]</scope>
    <source>
        <strain>ZK / E33L</strain>
    </source>
</reference>
<dbReference type="EMBL" id="CP000001">
    <property type="protein sequence ID" value="AAU19596.1"/>
    <property type="molecule type" value="Genomic_DNA"/>
</dbReference>
<dbReference type="RefSeq" id="WP_000638342.1">
    <property type="nucleotide sequence ID" value="NC_006274.1"/>
</dbReference>
<dbReference type="SMR" id="Q63FR1"/>
<dbReference type="KEGG" id="bcz:BCE33L0646"/>
<dbReference type="PATRIC" id="fig|288681.22.peg.4941"/>
<dbReference type="Proteomes" id="UP000002612">
    <property type="component" value="Chromosome"/>
</dbReference>
<dbReference type="GO" id="GO:0005886">
    <property type="term" value="C:plasma membrane"/>
    <property type="evidence" value="ECO:0007669"/>
    <property type="project" value="UniProtKB-SubCell"/>
</dbReference>
<dbReference type="GO" id="GO:0008556">
    <property type="term" value="F:P-type potassium transmembrane transporter activity"/>
    <property type="evidence" value="ECO:0007669"/>
    <property type="project" value="InterPro"/>
</dbReference>
<dbReference type="GO" id="GO:0030955">
    <property type="term" value="F:potassium ion binding"/>
    <property type="evidence" value="ECO:0007669"/>
    <property type="project" value="UniProtKB-UniRule"/>
</dbReference>
<dbReference type="HAMAP" id="MF_00275">
    <property type="entry name" value="KdpA"/>
    <property type="match status" value="1"/>
</dbReference>
<dbReference type="InterPro" id="IPR004623">
    <property type="entry name" value="KdpA"/>
</dbReference>
<dbReference type="NCBIfam" id="TIGR00680">
    <property type="entry name" value="kdpA"/>
    <property type="match status" value="1"/>
</dbReference>
<dbReference type="PANTHER" id="PTHR30607">
    <property type="entry name" value="POTASSIUM-TRANSPORTING ATPASE A CHAIN"/>
    <property type="match status" value="1"/>
</dbReference>
<dbReference type="PANTHER" id="PTHR30607:SF2">
    <property type="entry name" value="POTASSIUM-TRANSPORTING ATPASE POTASSIUM-BINDING SUBUNIT"/>
    <property type="match status" value="1"/>
</dbReference>
<dbReference type="Pfam" id="PF03814">
    <property type="entry name" value="KdpA"/>
    <property type="match status" value="1"/>
</dbReference>
<dbReference type="PIRSF" id="PIRSF001294">
    <property type="entry name" value="K_ATPaseA"/>
    <property type="match status" value="1"/>
</dbReference>
<feature type="chain" id="PRO_0000166480" description="Potassium-transporting ATPase potassium-binding subunit">
    <location>
        <begin position="1"/>
        <end position="555"/>
    </location>
</feature>
<feature type="transmembrane region" description="Helical" evidence="1">
    <location>
        <begin position="2"/>
        <end position="22"/>
    </location>
</feature>
<feature type="transmembrane region" description="Helical" evidence="1">
    <location>
        <begin position="60"/>
        <end position="80"/>
    </location>
</feature>
<feature type="transmembrane region" description="Helical" evidence="1">
    <location>
        <begin position="130"/>
        <end position="150"/>
    </location>
</feature>
<feature type="transmembrane region" description="Helical" evidence="1">
    <location>
        <begin position="173"/>
        <end position="193"/>
    </location>
</feature>
<feature type="transmembrane region" description="Helical" evidence="1">
    <location>
        <begin position="246"/>
        <end position="266"/>
    </location>
</feature>
<feature type="transmembrane region" description="Helical" evidence="1">
    <location>
        <begin position="278"/>
        <end position="298"/>
    </location>
</feature>
<feature type="transmembrane region" description="Helical" evidence="1">
    <location>
        <begin position="374"/>
        <end position="394"/>
    </location>
</feature>
<feature type="transmembrane region" description="Helical" evidence="1">
    <location>
        <begin position="412"/>
        <end position="432"/>
    </location>
</feature>
<feature type="transmembrane region" description="Helical" evidence="1">
    <location>
        <begin position="483"/>
        <end position="503"/>
    </location>
</feature>
<feature type="transmembrane region" description="Helical" evidence="1">
    <location>
        <begin position="525"/>
        <end position="545"/>
    </location>
</feature>
<name>KDPA_BACCZ</name>
<gene>
    <name evidence="1" type="primary">kdpA</name>
    <name type="ordered locus">BCE33L0646</name>
</gene>